<comment type="function">
    <text evidence="2 3">Transcriptional repressor which forms a core component of the circadian clock. The circadian clock, an internal time-keeping system, regulates various physiological processes through the generation of approximately 24 hour circadian rhythms in gene expression, which are translated into rhythms in metabolism and behavior. It is derived from the Latin roots 'circa' (about) and 'diem' (day) and acts as an important regulator of a wide array of physiological functions including metabolism, sleep, body temperature, blood pressure, endocrine, immune, cardiovascular, and renal function. Consists of two major components: the central clock, residing in the suprachiasmatic nucleus (SCN) of the brain, and the peripheral clocks that are present in nearly every tissue and organ system. Both the central and peripheral clocks can be reset by environmental cues, also known as Zeitgebers (German for 'timegivers'). The predominant Zeitgeber for the central clock is light, which is sensed by retina and signals directly to the SCN. The central clock entrains the peripheral clocks through neuronal and hormonal signals, body temperature and feeding-related cues, aligning all clocks with the external light/dark cycle. Circadian rhythms allow an organism to achieve temporal homeostasis with its environment at the molecular level by regulating gene expression to create a peak of protein expression once every 24 hours to control when a particular physiological process is most active with respect to the solar day. Transcription and translation of core clock components (CLOCK, NPAS2, BMAL1, BMAL2, PER1, PER2, PER3, CRY1 and CRY2) plays a critical role in rhythm generation, whereas delays imposed by post-translational modifications (PTMs) are important for determining the period (tau) of the rhythms (tau refers to the period of a rhythm and is the length, in time, of one complete cycle). A diurnal rhythm is synchronized with the day/night cycle, while the ultradian and infradian rhythms have a period shorter and longer than 24 hours, respectively. Disruptions in the circadian rhythms contribute to the pathology of cardiovascular diseases, cancer, metabolic syndromes and aging. A transcription/translation feedback loop (TTFL) forms the core of the molecular circadian clock mechanism. Transcription factors, CLOCK or NPAS2 and BMAL1 or BMAL2, form the positive limb of the feedback loop, act in the form of a heterodimer and activate the transcription of core clock genes and clock-controlled genes (involved in key metabolic processes), harboring E-box elements (5'-CACGTG-3') within their promoters. The core clock genes: PER1/2/3 and CRY1/2 which are transcriptional repressors form the negative limb of the feedback loop and interact with the CLOCK|NPAS2-BMAL1|BMAL2 heterodimer inhibiting its activity and thereby negatively regulating their own expression. This heterodimer also activates nuclear receptors NR1D1/2 and RORA/B/G, which form a second feedback loop and which activate and repress BMAL1 transcription, respectively. CRY1 and CRY2 have redundant functions but also differential and selective contributions at least in defining the pace of the SCN circadian clock and its circadian transcriptional outputs. More potent transcriptional repressor in cerebellum and liver than CRY2, though more effective in lengthening the period of the SCN oscillator. On its side, CRY2 seems to play a critical role in tuning SCN circadian period by opposing the action of CRY1. With CRY2, is dispensable for circadian rhythm generation but necessary for the development of intercellular networks for rhythm synchrony. Capable of translocating circadian clock core proteins such as PER proteins to the nucleus. Interacts with CLOCK-BMAL1 independently of PER proteins and is found at CLOCK-BMAL1-bound sites, suggesting that CRY may act as a molecular gatekeeper to maintain CLOCK-BMAL1 in a poised and repressed state until the proper time for transcriptional activation. Represses the CLOCK-BMAL1 induced transcription of BHLHE40/DEC1, ATF4, MTA1, KLF10 and NAMPT. May repress circadian target genes expression in collaboration with HDAC1 and HDAC2 through histone deacetylation. Mediates the clock-control activation of ATR and modulates ATR-mediated DNA damage checkpoint. In liver, mediates circadian regulation of cAMP signaling and gluconeogenesis by binding to membrane-coupled G proteins and blocking glucagon-mediated increases in intracellular cAMP concentrations and CREB1 phosphorylation. Inhibits hepatic gluconeogenesis by decreasing nuclear FOXO1 levels that down-regulates gluconeogenic gene expression. Besides its role in the maintenance of the circadian clock, is also involved in the regulation of other processes. Represses glucocorticoid receptor NR3C1/GR-induced transcriptional activity by binding to glucocorticoid response elements (GREs). Plays a key role in glucose and lipid metabolism modulation, in part, through the transcriptional regulation of genes involved in these pathways, such as LEP or ACSL4 (By similarity). Represses PPARD and its target genes in the skeletal muscle and limits exercise capacity (By similarity). Plays an essential role in the generation of circadian rhythms in the retina (By similarity). Represses the transcriptional activity of NR1I2 (By similarity).</text>
</comment>
<comment type="cofactor">
    <cofactor evidence="2">
        <name>FAD</name>
        <dbReference type="ChEBI" id="CHEBI:57692"/>
    </cofactor>
    <text evidence="2">Binds 1 FAD per subunit. Only a minority of the protein molecules contain bound FAD. Contrary to the situation in photolyases, the FAD is bound in a shallow, surface-exposed pocket.</text>
</comment>
<comment type="cofactor">
    <cofactor evidence="1">
        <name>(6R)-5,10-methylene-5,6,7,8-tetrahydrofolate</name>
        <dbReference type="ChEBI" id="CHEBI:15636"/>
    </cofactor>
    <text evidence="1">Binds 1 5,10-methenyltetrahydrofolate (MTHF) non-covalently per subunit.</text>
</comment>
<comment type="subunit">
    <text evidence="2">Component of the circadian core oscillator, which includes the CRY proteins, CLOCK or NPAS2, BMAL1 or BMAL2, CSNK1D and/or CSNK1E, TIMELESS, and the PER proteins (By similarity). Interacts directly with TIMELESS (By similarity). Interacts directly with PER1, PER2 and PER3; interaction with PER2 inhibits its ubiquitination and vice versa (By similarity). Interacts with FBXL21 (By similarity). Interacts with FBXL3 (By similarity). Interacts with CLOCK-BMAL1 independently of PER2 and DNA (By similarity). Interacts with HDAC1, HDAC2 and SIN3B (By similarity). Interacts with nuclear receptors AR, NR1D1, NR3C1/GR, RORA and RORC; the interaction with at least NR3C1/GR is ligand dependent (By similarity). Interacts with PRKDC (By similarity). Interacts with the G protein subunit alpha GNAS; the interaction may block GPCR-mediated regulation of cAMP concentrations (By similarity). Interacts with PRMT5 (By similarity). Interacts with EZH2 (By similarity). Interacts with MYBBP1A, DOCK7, HNRNPU, RPL7A, RPL8 and RPS3 (By similarity). Interacts with PPP5C (via TPR repeats) (By similarity). Interacts with MAP1LC3B (By similarity). Interacts with CLOCK (By similarity). Interacts with BMAL1 (By similarity). Interacts weakly with HDAC3; this interaction is enhanced in the presence of FBXL3 (By similarity). Interacts with TRIM28, KCTD5 and DDB1 (By similarity) Interacts with HNF4A (By similarity). Interacts with PSMD2 in a KDM8-dependent manner (By similarity). Interacts with KDM8 in a FBXL3-dependent manner (By similarity). Interacts with PPARG in a ligand-dependent manner (By similarity). Interacts with PPARD (via domain NR LBD) and NR1I2 (via domain NR LBD) in a ligand-dependent manner (By similarity). Interacts with PPARA, NR1I3 and VDR (By similarity).</text>
</comment>
<comment type="subcellular location">
    <subcellularLocation>
        <location evidence="2">Cytoplasm</location>
    </subcellularLocation>
    <subcellularLocation>
        <location evidence="2">Nucleus</location>
    </subcellularLocation>
    <text evidence="2">Translocated to the nucleus through interaction with other clock proteins such as PER2 or BMAL1.</text>
</comment>
<comment type="tissue specificity">
    <text evidence="5">Expressed in all tissues tested including spleen, liver, skeletal muscle, kidney, brain, intestine, eye, harderian gland, liver and heart. Highest levels in the eye, brain, kidney and harderian gland. In the brain, especially located to the suprachiasma nucleus (SCN).</text>
</comment>
<comment type="induction">
    <text evidence="5">Expression is regulated by light and circadian rhythms. In the SCN and harderian gland, maximum expression at ZT 6, lowest expression in the middle of the night at ZT 18. In the retina, peak levels at ZT 12, lowest levels at ZT 18.</text>
</comment>
<comment type="domain">
    <text evidence="2">The LIR motifs (LC3-interacting region) 3 and 5 are required for its interaction with MAP1LC3B and for its autophagy-mediated degradation.</text>
</comment>
<comment type="PTM">
    <text evidence="2">Phosphorylation on Ser-247 by MAPK is important for the inhibition of CLOCK-BMAL1-mediated transcriptional activity. Phosphorylation by CSNK1E requires interaction with PER1 or PER2. Phosphorylation at Ser-71 and Ser-280 by AMPK decreases protein stability. Phosphorylation at Ser-569 exhibits a robust circadian rhythm with a peak at CT8, increases protein stability, prevents SCF(FBXL3)-mediated degradation and is antagonized by interaction with PRKDC.</text>
</comment>
<comment type="PTM">
    <text evidence="2">Ubiquitinated by the SCF(FBXL3) and SCF(FBXL21) complexes, regulating the balance between degradation and stabilization (By similarity). The SCF(FBXL3) complex is mainly nuclear and mediates ubiquitination and subsequent degradation of CRY1 (By similarity). In contrast, cytoplasmic SCF(FBXL21) complex-mediated ubiquitination leads to stabilize CRY1 and counteract the activity of the SCF(FBXL3) complex (By similarity). The SCF(FBXL3) and SCF(FBXL21) complexes probably mediate ubiquitination at different Lys residues (By similarity). Ubiquitination at Lys-11 and Lys-107 are specifically ubiquitinated by the SCF(FBXL21) complex but not by the SCF(FBXL3) complex (By similarity). Ubiquitination may be inhibited by PER2 (By similarity). Deubiquitinated by USP7 (By similarity).</text>
</comment>
<comment type="PTM">
    <text evidence="2">Undergoes autophagy-mediated degradation in the liver in a time-dependent manner. Autophagic degradation of CRY1 (an inhibitor of gluconeogenesis) occurs during periods of reduced feeding allowing induction of gluconeogenesis and maintenance of blood glucose levels.</text>
</comment>
<comment type="similarity">
    <text evidence="6">Belongs to the DNA photolyase class-1 family.</text>
</comment>
<dbReference type="EMBL" id="AJ606298">
    <property type="protein sequence ID" value="CAE54425.1"/>
    <property type="molecule type" value="mRNA"/>
</dbReference>
<dbReference type="SMR" id="Q70AD6"/>
<dbReference type="GO" id="GO:0005737">
    <property type="term" value="C:cytoplasm"/>
    <property type="evidence" value="ECO:0007669"/>
    <property type="project" value="UniProtKB-SubCell"/>
</dbReference>
<dbReference type="GO" id="GO:0005634">
    <property type="term" value="C:nucleus"/>
    <property type="evidence" value="ECO:0000250"/>
    <property type="project" value="UniProtKB"/>
</dbReference>
<dbReference type="GO" id="GO:0003677">
    <property type="term" value="F:DNA binding"/>
    <property type="evidence" value="ECO:0007669"/>
    <property type="project" value="TreeGrafter"/>
</dbReference>
<dbReference type="GO" id="GO:0071949">
    <property type="term" value="F:FAD binding"/>
    <property type="evidence" value="ECO:0007669"/>
    <property type="project" value="TreeGrafter"/>
</dbReference>
<dbReference type="GO" id="GO:0009881">
    <property type="term" value="F:photoreceptor activity"/>
    <property type="evidence" value="ECO:0007669"/>
    <property type="project" value="UniProtKB-KW"/>
</dbReference>
<dbReference type="GO" id="GO:0032922">
    <property type="term" value="P:circadian regulation of gene expression"/>
    <property type="evidence" value="ECO:0000250"/>
    <property type="project" value="UniProtKB"/>
</dbReference>
<dbReference type="GO" id="GO:0007623">
    <property type="term" value="P:circadian rhythm"/>
    <property type="evidence" value="ECO:0000250"/>
    <property type="project" value="UniProtKB"/>
</dbReference>
<dbReference type="GO" id="GO:0043153">
    <property type="term" value="P:entrainment of circadian clock by photoperiod"/>
    <property type="evidence" value="ECO:0000250"/>
    <property type="project" value="UniProtKB"/>
</dbReference>
<dbReference type="GO" id="GO:0006094">
    <property type="term" value="P:gluconeogenesis"/>
    <property type="evidence" value="ECO:0000250"/>
    <property type="project" value="UniProtKB"/>
</dbReference>
<dbReference type="GO" id="GO:0042593">
    <property type="term" value="P:glucose homeostasis"/>
    <property type="evidence" value="ECO:0000250"/>
    <property type="project" value="UniProtKB"/>
</dbReference>
<dbReference type="GO" id="GO:0042754">
    <property type="term" value="P:negative regulation of circadian rhythm"/>
    <property type="evidence" value="ECO:0000250"/>
    <property type="project" value="UniProtKB"/>
</dbReference>
<dbReference type="GO" id="GO:0045892">
    <property type="term" value="P:negative regulation of DNA-templated transcription"/>
    <property type="evidence" value="ECO:0000250"/>
    <property type="project" value="UniProtKB"/>
</dbReference>
<dbReference type="GO" id="GO:0045744">
    <property type="term" value="P:negative regulation of G protein-coupled receptor signaling pathway"/>
    <property type="evidence" value="ECO:0000250"/>
    <property type="project" value="UniProtKB"/>
</dbReference>
<dbReference type="GO" id="GO:0045721">
    <property type="term" value="P:negative regulation of gluconeogenesis"/>
    <property type="evidence" value="ECO:0000250"/>
    <property type="project" value="UniProtKB"/>
</dbReference>
<dbReference type="GO" id="GO:2000323">
    <property type="term" value="P:negative regulation of nuclear receptor-mediated glucocorticoid signaling pathway"/>
    <property type="evidence" value="ECO:0000250"/>
    <property type="project" value="UniProtKB"/>
</dbReference>
<dbReference type="GO" id="GO:0031397">
    <property type="term" value="P:negative regulation of protein ubiquitination"/>
    <property type="evidence" value="ECO:0000250"/>
    <property type="project" value="UniProtKB"/>
</dbReference>
<dbReference type="GO" id="GO:0000122">
    <property type="term" value="P:negative regulation of transcription by RNA polymerase II"/>
    <property type="evidence" value="ECO:0000250"/>
    <property type="project" value="UniProtKB"/>
</dbReference>
<dbReference type="GO" id="GO:0042752">
    <property type="term" value="P:regulation of circadian rhythm"/>
    <property type="evidence" value="ECO:0000250"/>
    <property type="project" value="UniProtKB"/>
</dbReference>
<dbReference type="GO" id="GO:2000001">
    <property type="term" value="P:regulation of DNA damage checkpoint"/>
    <property type="evidence" value="ECO:0000250"/>
    <property type="project" value="UniProtKB"/>
</dbReference>
<dbReference type="GO" id="GO:0014823">
    <property type="term" value="P:response to activity"/>
    <property type="evidence" value="ECO:0000250"/>
    <property type="project" value="UniProtKB"/>
</dbReference>
<dbReference type="GO" id="GO:0033762">
    <property type="term" value="P:response to glucagon"/>
    <property type="evidence" value="ECO:0000250"/>
    <property type="project" value="UniProtKB"/>
</dbReference>
<dbReference type="GO" id="GO:0009416">
    <property type="term" value="P:response to light stimulus"/>
    <property type="evidence" value="ECO:0000250"/>
    <property type="project" value="UniProtKB"/>
</dbReference>
<dbReference type="GO" id="GO:0042770">
    <property type="term" value="P:signal transduction in response to DNA damage"/>
    <property type="evidence" value="ECO:0000250"/>
    <property type="project" value="UniProtKB"/>
</dbReference>
<dbReference type="FunFam" id="1.10.579.10:FF:000001">
    <property type="entry name" value="Cryptochrome 1"/>
    <property type="match status" value="1"/>
</dbReference>
<dbReference type="FunFam" id="1.25.40.80:FF:000002">
    <property type="entry name" value="cryptochrome-1 isoform X1"/>
    <property type="match status" value="1"/>
</dbReference>
<dbReference type="FunFam" id="1.25.40.80:FF:000003">
    <property type="entry name" value="cryptochrome-1 isoform X1"/>
    <property type="match status" value="1"/>
</dbReference>
<dbReference type="FunFam" id="3.40.50.620:FF:000099">
    <property type="entry name" value="cryptochrome-1 isoform X1"/>
    <property type="match status" value="1"/>
</dbReference>
<dbReference type="Gene3D" id="1.25.40.80">
    <property type="match status" value="2"/>
</dbReference>
<dbReference type="Gene3D" id="1.10.579.10">
    <property type="entry name" value="DNA Cyclobutane Dipyrimidine Photolyase, subunit A, domain 3"/>
    <property type="match status" value="1"/>
</dbReference>
<dbReference type="Gene3D" id="3.40.50.620">
    <property type="entry name" value="HUPs"/>
    <property type="match status" value="1"/>
</dbReference>
<dbReference type="InterPro" id="IPR036134">
    <property type="entry name" value="Crypto/Photolyase_FAD-like_sf"/>
</dbReference>
<dbReference type="InterPro" id="IPR036155">
    <property type="entry name" value="Crypto/Photolyase_N_sf"/>
</dbReference>
<dbReference type="InterPro" id="IPR005101">
    <property type="entry name" value="Cryptochr/Photolyase_FAD-bd"/>
</dbReference>
<dbReference type="InterPro" id="IPR002081">
    <property type="entry name" value="Cryptochrome/DNA_photolyase_1"/>
</dbReference>
<dbReference type="InterPro" id="IPR006050">
    <property type="entry name" value="DNA_photolyase_N"/>
</dbReference>
<dbReference type="InterPro" id="IPR014729">
    <property type="entry name" value="Rossmann-like_a/b/a_fold"/>
</dbReference>
<dbReference type="PANTHER" id="PTHR11455">
    <property type="entry name" value="CRYPTOCHROME"/>
    <property type="match status" value="1"/>
</dbReference>
<dbReference type="PANTHER" id="PTHR11455:SF16">
    <property type="entry name" value="CRYPTOCHROME-1"/>
    <property type="match status" value="1"/>
</dbReference>
<dbReference type="Pfam" id="PF00875">
    <property type="entry name" value="DNA_photolyase"/>
    <property type="match status" value="1"/>
</dbReference>
<dbReference type="Pfam" id="PF03441">
    <property type="entry name" value="FAD_binding_7"/>
    <property type="match status" value="1"/>
</dbReference>
<dbReference type="SUPFAM" id="SSF48173">
    <property type="entry name" value="Cryptochrome/photolyase FAD-binding domain"/>
    <property type="match status" value="1"/>
</dbReference>
<dbReference type="SUPFAM" id="SSF52425">
    <property type="entry name" value="Cryptochrome/photolyase, N-terminal domain"/>
    <property type="match status" value="1"/>
</dbReference>
<dbReference type="PROSITE" id="PS51645">
    <property type="entry name" value="PHR_CRY_ALPHA_BETA"/>
    <property type="match status" value="1"/>
</dbReference>
<organism>
    <name type="scientific">Spalax judaei</name>
    <name type="common">Judean Mountains blind mole rat</name>
    <name type="synonym">Nannospalax judaei</name>
    <dbReference type="NCBI Taxonomy" id="134510"/>
    <lineage>
        <taxon>Eukaryota</taxon>
        <taxon>Metazoa</taxon>
        <taxon>Chordata</taxon>
        <taxon>Craniata</taxon>
        <taxon>Vertebrata</taxon>
        <taxon>Euteleostomi</taxon>
        <taxon>Mammalia</taxon>
        <taxon>Eutheria</taxon>
        <taxon>Euarchontoglires</taxon>
        <taxon>Glires</taxon>
        <taxon>Rodentia</taxon>
        <taxon>Myomorpha</taxon>
        <taxon>Muroidea</taxon>
        <taxon>Spalacidae</taxon>
        <taxon>Spalacinae</taxon>
        <taxon>Nannospalax</taxon>
    </lineage>
</organism>
<accession>Q70AD6</accession>
<name>CRY1_SPAJD</name>
<sequence>MGVNAVHWFRKGLRLHDNPALKECIQGADTIRCVYILDPWFAGSSNVGINRWRFLLQCLEDLDANLRKLNSRLLVIRGQPADVFPRLFKEWNITKLSIEYDSEPFGKERDAAIKKLATEAGVEVIVRISHTLYDLDKIIELNGGQPPLTYKRFQTLISKMEPLEIPVETITSEVIEKCTTPLSDDHDEKYGVPSLEELGFDTDGLSSAVWPGGETEALTRLERHLERRAWVANFERPRMNANSLLASPTGLSPYLRFGCLSCRLFYFKLTDLYKKVKKNSSPPLSLYGQLLWREFFYTAATNNPRFDKMEGNPICVQIPWDKNPEALAKWAEGRTGFPWIDAIMTQLRQEGWIHHLARHAVACFLTGSDLWISWEEGMKVFEELLLDADWSINAGSWMWLSCSSFFQQFFHCYCPVGFGRRTDPNGDYIRRYLPVLRGFPAKYIYDPWNAPEGIQKVAKCLIGVNYPKPMVNHAEASRLNIERMKQIYQQLSRYRGLGLLASVPSNPNGNGGLMGYTPGENIPNCSSSGSCSQGSGILHYAHGDSQQAHLLKQGSSSMGHGLSNGKRPSQEEDTQSIGPKVQRQSTN</sequence>
<reference key="1">
    <citation type="journal article" date="2004" name="J. Biol. Rhythms">
        <title>Circadian genes in a blind subterranean mammal III: molecular cloning and circadian regulation of cryptochrome genes in the blind subterranean mole rat, Spalax ehrenbergi superspecies.</title>
        <authorList>
            <person name="Avivi A."/>
            <person name="Oster H."/>
            <person name="Joel A."/>
            <person name="Beiles A."/>
            <person name="Albrecht U."/>
            <person name="Nevo E."/>
        </authorList>
    </citation>
    <scope>NUCLEOTIDE SEQUENCE [MRNA]</scope>
    <scope>TISSUE SPECIFICITY</scope>
    <scope>INDUCTION</scope>
    <source>
        <tissue>Brain</tissue>
    </source>
</reference>
<keyword id="KW-0090">Biological rhythms</keyword>
<keyword id="KW-0157">Chromophore</keyword>
<keyword id="KW-0963">Cytoplasm</keyword>
<keyword id="KW-0274">FAD</keyword>
<keyword id="KW-0285">Flavoprotein</keyword>
<keyword id="KW-1017">Isopeptide bond</keyword>
<keyword id="KW-0547">Nucleotide-binding</keyword>
<keyword id="KW-0539">Nucleus</keyword>
<keyword id="KW-0597">Phosphoprotein</keyword>
<keyword id="KW-0600">Photoreceptor protein</keyword>
<keyword id="KW-0675">Receptor</keyword>
<keyword id="KW-0678">Repressor</keyword>
<keyword id="KW-0716">Sensory transduction</keyword>
<keyword id="KW-0804">Transcription</keyword>
<keyword id="KW-0805">Transcription regulation</keyword>
<keyword id="KW-0832">Ubl conjugation</keyword>
<evidence type="ECO:0000250" key="1"/>
<evidence type="ECO:0000250" key="2">
    <source>
        <dbReference type="UniProtKB" id="P97784"/>
    </source>
</evidence>
<evidence type="ECO:0000250" key="3">
    <source>
        <dbReference type="UniProtKB" id="Q16526"/>
    </source>
</evidence>
<evidence type="ECO:0000256" key="4">
    <source>
        <dbReference type="SAM" id="MobiDB-lite"/>
    </source>
</evidence>
<evidence type="ECO:0000269" key="5">
    <source>
    </source>
</evidence>
<evidence type="ECO:0000305" key="6"/>
<proteinExistence type="evidence at transcript level"/>
<gene>
    <name type="primary">CRY1</name>
</gene>
<protein>
    <recommendedName>
        <fullName>Cryptochrome-1</fullName>
    </recommendedName>
</protein>
<feature type="chain" id="PRO_0000261144" description="Cryptochrome-1">
    <location>
        <begin position="1"/>
        <end position="587"/>
    </location>
</feature>
<feature type="domain" description="Photolyase/cryptochrome alpha/beta">
    <location>
        <begin position="3"/>
        <end position="132"/>
    </location>
</feature>
<feature type="region of interest" description="Required for inhibition of CLOCK-BMAL1-mediated transcription" evidence="2">
    <location>
        <begin position="371"/>
        <end position="470"/>
    </location>
</feature>
<feature type="region of interest" description="Interaction with TIMELESS" evidence="2">
    <location>
        <begin position="471"/>
        <end position="493"/>
    </location>
</feature>
<feature type="region of interest" description="Disordered" evidence="4">
    <location>
        <begin position="554"/>
        <end position="587"/>
    </location>
</feature>
<feature type="short sequence motif" description="LIR 1" evidence="2">
    <location>
        <begin position="50"/>
        <end position="54"/>
    </location>
</feature>
<feature type="short sequence motif" description="LIR 2" evidence="2">
    <location>
        <begin position="82"/>
        <end position="87"/>
    </location>
</feature>
<feature type="short sequence motif" description="LIR 3" evidence="2">
    <location>
        <begin position="151"/>
        <end position="156"/>
    </location>
</feature>
<feature type="short sequence motif" description="LIR 4" evidence="2">
    <location>
        <begin position="255"/>
        <end position="260"/>
    </location>
</feature>
<feature type="short sequence motif" description="LIR 5" evidence="2">
    <location>
        <begin position="271"/>
        <end position="276"/>
    </location>
</feature>
<feature type="short sequence motif" description="LIR 6" evidence="2">
    <location>
        <begin position="285"/>
        <end position="290"/>
    </location>
</feature>
<feature type="short sequence motif" description="LIR 7" evidence="2">
    <location>
        <begin position="335"/>
        <end position="339"/>
    </location>
</feature>
<feature type="short sequence motif" description="LIR 8" evidence="2">
    <location>
        <begin position="379"/>
        <end position="384"/>
    </location>
</feature>
<feature type="short sequence motif" description="LIR 9" evidence="2">
    <location>
        <begin position="395"/>
        <end position="400"/>
    </location>
</feature>
<feature type="short sequence motif" description="LIR 10" evidence="2">
    <location>
        <begin position="411"/>
        <end position="416"/>
    </location>
</feature>
<feature type="short sequence motif" description="LIR 11" evidence="2">
    <location>
        <begin position="430"/>
        <end position="435"/>
    </location>
</feature>
<feature type="short sequence motif" description="LIR 12" evidence="2">
    <location>
        <begin position="486"/>
        <end position="491"/>
    </location>
</feature>
<feature type="short sequence motif" description="LIR 13" evidence="2">
    <location>
        <begin position="492"/>
        <end position="497"/>
    </location>
</feature>
<feature type="binding site" evidence="2">
    <location>
        <position position="252"/>
    </location>
    <ligand>
        <name>FAD</name>
        <dbReference type="ChEBI" id="CHEBI:57692"/>
    </ligand>
</feature>
<feature type="binding site" evidence="2">
    <location>
        <position position="289"/>
    </location>
    <ligand>
        <name>FAD</name>
        <dbReference type="ChEBI" id="CHEBI:57692"/>
    </ligand>
</feature>
<feature type="binding site" evidence="2">
    <location>
        <position position="355"/>
    </location>
    <ligand>
        <name>FAD</name>
        <dbReference type="ChEBI" id="CHEBI:57692"/>
    </ligand>
</feature>
<feature type="binding site" evidence="2">
    <location>
        <begin position="387"/>
        <end position="389"/>
    </location>
    <ligand>
        <name>FAD</name>
        <dbReference type="ChEBI" id="CHEBI:57692"/>
    </ligand>
</feature>
<feature type="modified residue" description="Phosphoserine; by AMPK" evidence="2">
    <location>
        <position position="71"/>
    </location>
</feature>
<feature type="modified residue" description="Phosphoserine; by MAPK" evidence="2">
    <location>
        <position position="247"/>
    </location>
</feature>
<feature type="modified residue" description="Phosphoserine; by AMPK" evidence="2">
    <location>
        <position position="280"/>
    </location>
</feature>
<feature type="modified residue" description="Phosphoserine" evidence="2">
    <location>
        <position position="569"/>
    </location>
</feature>
<feature type="cross-link" description="Glycyl lysine isopeptide (Lys-Gly) (interchain with G-Cter in ubiquitin)" evidence="2">
    <location>
        <position position="11"/>
    </location>
</feature>
<feature type="cross-link" description="Glycyl lysine isopeptide (Lys-Gly) (interchain with G-Cter in ubiquitin)" evidence="2">
    <location>
        <position position="107"/>
    </location>
</feature>
<feature type="cross-link" description="Glycyl lysine isopeptide (Lys-Gly) (interchain with G-Cter in ubiquitin)" evidence="2">
    <location>
        <position position="159"/>
    </location>
</feature>
<feature type="cross-link" description="Glycyl lysine isopeptide (Lys-Gly) (interchain with G-Cter in ubiquitin)" evidence="2">
    <location>
        <position position="329"/>
    </location>
</feature>
<feature type="cross-link" description="Glycyl lysine isopeptide (Lys-Gly) (interchain with G-Cter in ubiquitin)" evidence="2">
    <location>
        <position position="485"/>
    </location>
</feature>